<organism>
    <name type="scientific">Salmonella paratyphi A (strain ATCC 9150 / SARB42)</name>
    <dbReference type="NCBI Taxonomy" id="295319"/>
    <lineage>
        <taxon>Bacteria</taxon>
        <taxon>Pseudomonadati</taxon>
        <taxon>Pseudomonadota</taxon>
        <taxon>Gammaproteobacteria</taxon>
        <taxon>Enterobacterales</taxon>
        <taxon>Enterobacteriaceae</taxon>
        <taxon>Salmonella</taxon>
    </lineage>
</organism>
<gene>
    <name evidence="2" type="primary">dnaJ</name>
    <name type="ordered locus">SPA0013</name>
</gene>
<protein>
    <recommendedName>
        <fullName evidence="2">Chaperone protein DnaJ</fullName>
    </recommendedName>
</protein>
<name>DNAJ_SALPA</name>
<accession>Q5PDJ4</accession>
<sequence>MAKRDYYEILGVSKTAEEREIKKAYKRLAMKYHPDRNQGDKEAEAKFKEIKEAYEVLTDAQKRAAYDQYGHAAFEQGGMGGGFNGGADFSDIFGDVFGDIFGGGRGRQRAARGADLRYNMDLTLEEAVRGVTKEIRIPTLEECDVCHGSGAKAGTQPQTCPTCHGSGQVQMRQGFFAVQQTCPHCQGRGTLIKDPCHKCHGHGRVEKSKTLSVKIPAGVDTGDRIRLAGEGEAGEHGAPAGDLYVQVQVKQHPIFEREGNNLYCEVPINFAMAALGGEIEVPTLDGRVMLKVPSETQTGKLFRMRGKGVKSVRGGAQGDLLCRVVVETPVGLSEKQKQLLKDLQESFGGPTGEKNSPRSKSFFDGVKKFFDDLTR</sequence>
<dbReference type="EMBL" id="CP000026">
    <property type="protein sequence ID" value="AAV76051.1"/>
    <property type="molecule type" value="Genomic_DNA"/>
</dbReference>
<dbReference type="RefSeq" id="WP_001119012.1">
    <property type="nucleotide sequence ID" value="NC_006511.1"/>
</dbReference>
<dbReference type="SMR" id="Q5PDJ4"/>
<dbReference type="KEGG" id="spt:SPA0013"/>
<dbReference type="HOGENOM" id="CLU_017633_0_7_6"/>
<dbReference type="Proteomes" id="UP000008185">
    <property type="component" value="Chromosome"/>
</dbReference>
<dbReference type="GO" id="GO:0005737">
    <property type="term" value="C:cytoplasm"/>
    <property type="evidence" value="ECO:0007669"/>
    <property type="project" value="UniProtKB-SubCell"/>
</dbReference>
<dbReference type="GO" id="GO:0005524">
    <property type="term" value="F:ATP binding"/>
    <property type="evidence" value="ECO:0007669"/>
    <property type="project" value="InterPro"/>
</dbReference>
<dbReference type="GO" id="GO:0031072">
    <property type="term" value="F:heat shock protein binding"/>
    <property type="evidence" value="ECO:0007669"/>
    <property type="project" value="InterPro"/>
</dbReference>
<dbReference type="GO" id="GO:0051082">
    <property type="term" value="F:unfolded protein binding"/>
    <property type="evidence" value="ECO:0007669"/>
    <property type="project" value="UniProtKB-UniRule"/>
</dbReference>
<dbReference type="GO" id="GO:0008270">
    <property type="term" value="F:zinc ion binding"/>
    <property type="evidence" value="ECO:0007669"/>
    <property type="project" value="UniProtKB-UniRule"/>
</dbReference>
<dbReference type="GO" id="GO:0051085">
    <property type="term" value="P:chaperone cofactor-dependent protein refolding"/>
    <property type="evidence" value="ECO:0007669"/>
    <property type="project" value="TreeGrafter"/>
</dbReference>
<dbReference type="GO" id="GO:0006260">
    <property type="term" value="P:DNA replication"/>
    <property type="evidence" value="ECO:0007669"/>
    <property type="project" value="UniProtKB-KW"/>
</dbReference>
<dbReference type="GO" id="GO:0042026">
    <property type="term" value="P:protein refolding"/>
    <property type="evidence" value="ECO:0007669"/>
    <property type="project" value="TreeGrafter"/>
</dbReference>
<dbReference type="GO" id="GO:0009408">
    <property type="term" value="P:response to heat"/>
    <property type="evidence" value="ECO:0007669"/>
    <property type="project" value="InterPro"/>
</dbReference>
<dbReference type="CDD" id="cd06257">
    <property type="entry name" value="DnaJ"/>
    <property type="match status" value="1"/>
</dbReference>
<dbReference type="CDD" id="cd10747">
    <property type="entry name" value="DnaJ_C"/>
    <property type="match status" value="1"/>
</dbReference>
<dbReference type="CDD" id="cd10719">
    <property type="entry name" value="DnaJ_zf"/>
    <property type="match status" value="1"/>
</dbReference>
<dbReference type="FunFam" id="1.10.287.110:FF:000003">
    <property type="entry name" value="Molecular chaperone DnaJ"/>
    <property type="match status" value="1"/>
</dbReference>
<dbReference type="FunFam" id="2.10.230.10:FF:000002">
    <property type="entry name" value="Molecular chaperone DnaJ"/>
    <property type="match status" value="1"/>
</dbReference>
<dbReference type="FunFam" id="2.60.260.20:FF:000004">
    <property type="entry name" value="Molecular chaperone DnaJ"/>
    <property type="match status" value="1"/>
</dbReference>
<dbReference type="Gene3D" id="1.10.287.110">
    <property type="entry name" value="DnaJ domain"/>
    <property type="match status" value="1"/>
</dbReference>
<dbReference type="Gene3D" id="2.10.230.10">
    <property type="entry name" value="Heat shock protein DnaJ, cysteine-rich domain"/>
    <property type="match status" value="1"/>
</dbReference>
<dbReference type="Gene3D" id="2.60.260.20">
    <property type="entry name" value="Urease metallochaperone UreE, N-terminal domain"/>
    <property type="match status" value="2"/>
</dbReference>
<dbReference type="HAMAP" id="MF_01152">
    <property type="entry name" value="DnaJ"/>
    <property type="match status" value="1"/>
</dbReference>
<dbReference type="InterPro" id="IPR012724">
    <property type="entry name" value="DnaJ"/>
</dbReference>
<dbReference type="InterPro" id="IPR002939">
    <property type="entry name" value="DnaJ_C"/>
</dbReference>
<dbReference type="InterPro" id="IPR001623">
    <property type="entry name" value="DnaJ_domain"/>
</dbReference>
<dbReference type="InterPro" id="IPR018253">
    <property type="entry name" value="DnaJ_domain_CS"/>
</dbReference>
<dbReference type="InterPro" id="IPR008971">
    <property type="entry name" value="HSP40/DnaJ_pept-bd"/>
</dbReference>
<dbReference type="InterPro" id="IPR001305">
    <property type="entry name" value="HSP_DnaJ_Cys-rich_dom"/>
</dbReference>
<dbReference type="InterPro" id="IPR036410">
    <property type="entry name" value="HSP_DnaJ_Cys-rich_dom_sf"/>
</dbReference>
<dbReference type="InterPro" id="IPR036869">
    <property type="entry name" value="J_dom_sf"/>
</dbReference>
<dbReference type="NCBIfam" id="TIGR02349">
    <property type="entry name" value="DnaJ_bact"/>
    <property type="match status" value="1"/>
</dbReference>
<dbReference type="NCBIfam" id="NF008035">
    <property type="entry name" value="PRK10767.1"/>
    <property type="match status" value="1"/>
</dbReference>
<dbReference type="PANTHER" id="PTHR43096:SF48">
    <property type="entry name" value="CHAPERONE PROTEIN DNAJ"/>
    <property type="match status" value="1"/>
</dbReference>
<dbReference type="PANTHER" id="PTHR43096">
    <property type="entry name" value="DNAJ HOMOLOG 1, MITOCHONDRIAL-RELATED"/>
    <property type="match status" value="1"/>
</dbReference>
<dbReference type="Pfam" id="PF00226">
    <property type="entry name" value="DnaJ"/>
    <property type="match status" value="1"/>
</dbReference>
<dbReference type="Pfam" id="PF01556">
    <property type="entry name" value="DnaJ_C"/>
    <property type="match status" value="1"/>
</dbReference>
<dbReference type="Pfam" id="PF00684">
    <property type="entry name" value="DnaJ_CXXCXGXG"/>
    <property type="match status" value="1"/>
</dbReference>
<dbReference type="PRINTS" id="PR00625">
    <property type="entry name" value="JDOMAIN"/>
</dbReference>
<dbReference type="SMART" id="SM00271">
    <property type="entry name" value="DnaJ"/>
    <property type="match status" value="1"/>
</dbReference>
<dbReference type="SUPFAM" id="SSF46565">
    <property type="entry name" value="Chaperone J-domain"/>
    <property type="match status" value="1"/>
</dbReference>
<dbReference type="SUPFAM" id="SSF57938">
    <property type="entry name" value="DnaJ/Hsp40 cysteine-rich domain"/>
    <property type="match status" value="1"/>
</dbReference>
<dbReference type="SUPFAM" id="SSF49493">
    <property type="entry name" value="HSP40/DnaJ peptide-binding domain"/>
    <property type="match status" value="2"/>
</dbReference>
<dbReference type="PROSITE" id="PS00636">
    <property type="entry name" value="DNAJ_1"/>
    <property type="match status" value="1"/>
</dbReference>
<dbReference type="PROSITE" id="PS50076">
    <property type="entry name" value="DNAJ_2"/>
    <property type="match status" value="1"/>
</dbReference>
<dbReference type="PROSITE" id="PS51188">
    <property type="entry name" value="ZF_CR"/>
    <property type="match status" value="1"/>
</dbReference>
<comment type="function">
    <text evidence="2">Participates actively in the response to hyperosmotic and heat shock by preventing the aggregation of stress-denatured proteins and by disaggregating proteins, also in an autonomous, DnaK-independent fashion. Unfolded proteins bind initially to DnaJ; upon interaction with the DnaJ-bound protein, DnaK hydrolyzes its bound ATP, resulting in the formation of a stable complex. GrpE releases ADP from DnaK; ATP binding to DnaK triggers the release of the substrate protein, thus completing the reaction cycle. Several rounds of ATP-dependent interactions between DnaJ, DnaK and GrpE are required for fully efficient folding. Also involved, together with DnaK and GrpE, in the DNA replication of plasmids through activation of initiation proteins.</text>
</comment>
<comment type="cofactor">
    <cofactor evidence="2">
        <name>Zn(2+)</name>
        <dbReference type="ChEBI" id="CHEBI:29105"/>
    </cofactor>
    <text evidence="2">Binds 2 Zn(2+) ions per monomer.</text>
</comment>
<comment type="subunit">
    <text evidence="2">Homodimer.</text>
</comment>
<comment type="subcellular location">
    <subcellularLocation>
        <location evidence="2">Cytoplasm</location>
    </subcellularLocation>
</comment>
<comment type="induction">
    <text evidence="1">By heat shock.</text>
</comment>
<comment type="domain">
    <text evidence="2">The J domain is necessary and sufficient to stimulate DnaK ATPase activity. Zinc center 1 plays an important role in the autonomous, DnaK-independent chaperone activity of DnaJ. Zinc center 2 is essential for interaction with DnaK and for DnaJ activity.</text>
</comment>
<comment type="similarity">
    <text evidence="2">Belongs to the DnaJ family.</text>
</comment>
<keyword id="KW-0143">Chaperone</keyword>
<keyword id="KW-0963">Cytoplasm</keyword>
<keyword id="KW-0235">DNA replication</keyword>
<keyword id="KW-0479">Metal-binding</keyword>
<keyword id="KW-0677">Repeat</keyword>
<keyword id="KW-0346">Stress response</keyword>
<keyword id="KW-0862">Zinc</keyword>
<keyword id="KW-0863">Zinc-finger</keyword>
<evidence type="ECO:0000250" key="1"/>
<evidence type="ECO:0000255" key="2">
    <source>
        <dbReference type="HAMAP-Rule" id="MF_01152"/>
    </source>
</evidence>
<proteinExistence type="inferred from homology"/>
<reference key="1">
    <citation type="journal article" date="2004" name="Nat. Genet.">
        <title>Comparison of genome degradation in Paratyphi A and Typhi, human-restricted serovars of Salmonella enterica that cause typhoid.</title>
        <authorList>
            <person name="McClelland M."/>
            <person name="Sanderson K.E."/>
            <person name="Clifton S.W."/>
            <person name="Latreille P."/>
            <person name="Porwollik S."/>
            <person name="Sabo A."/>
            <person name="Meyer R."/>
            <person name="Bieri T."/>
            <person name="Ozersky P."/>
            <person name="McLellan M."/>
            <person name="Harkins C.R."/>
            <person name="Wang C."/>
            <person name="Nguyen C."/>
            <person name="Berghoff A."/>
            <person name="Elliott G."/>
            <person name="Kohlberg S."/>
            <person name="Strong C."/>
            <person name="Du F."/>
            <person name="Carter J."/>
            <person name="Kremizki C."/>
            <person name="Layman D."/>
            <person name="Leonard S."/>
            <person name="Sun H."/>
            <person name="Fulton L."/>
            <person name="Nash W."/>
            <person name="Miner T."/>
            <person name="Minx P."/>
            <person name="Delehaunty K."/>
            <person name="Fronick C."/>
            <person name="Magrini V."/>
            <person name="Nhan M."/>
            <person name="Warren W."/>
            <person name="Florea L."/>
            <person name="Spieth J."/>
            <person name="Wilson R.K."/>
        </authorList>
    </citation>
    <scope>NUCLEOTIDE SEQUENCE [LARGE SCALE GENOMIC DNA]</scope>
    <source>
        <strain>ATCC 9150 / SARB42</strain>
    </source>
</reference>
<feature type="initiator methionine" description="Removed" evidence="1">
    <location>
        <position position="1"/>
    </location>
</feature>
<feature type="chain" id="PRO_0000070876" description="Chaperone protein DnaJ">
    <location>
        <begin position="2"/>
        <end position="375"/>
    </location>
</feature>
<feature type="domain" description="J" evidence="2">
    <location>
        <begin position="5"/>
        <end position="70"/>
    </location>
</feature>
<feature type="repeat" description="CXXCXGXG motif">
    <location>
        <begin position="143"/>
        <end position="150"/>
    </location>
</feature>
<feature type="repeat" description="CXXCXGXG motif">
    <location>
        <begin position="160"/>
        <end position="167"/>
    </location>
</feature>
<feature type="repeat" description="CXXCXGXG motif">
    <location>
        <begin position="182"/>
        <end position="189"/>
    </location>
</feature>
<feature type="repeat" description="CXXCXGXG motif">
    <location>
        <begin position="196"/>
        <end position="203"/>
    </location>
</feature>
<feature type="zinc finger region" description="CR-type" evidence="2">
    <location>
        <begin position="130"/>
        <end position="208"/>
    </location>
</feature>
<feature type="binding site" evidence="2">
    <location>
        <position position="143"/>
    </location>
    <ligand>
        <name>Zn(2+)</name>
        <dbReference type="ChEBI" id="CHEBI:29105"/>
        <label>1</label>
    </ligand>
</feature>
<feature type="binding site" evidence="2">
    <location>
        <position position="146"/>
    </location>
    <ligand>
        <name>Zn(2+)</name>
        <dbReference type="ChEBI" id="CHEBI:29105"/>
        <label>1</label>
    </ligand>
</feature>
<feature type="binding site" evidence="2">
    <location>
        <position position="160"/>
    </location>
    <ligand>
        <name>Zn(2+)</name>
        <dbReference type="ChEBI" id="CHEBI:29105"/>
        <label>2</label>
    </ligand>
</feature>
<feature type="binding site" evidence="2">
    <location>
        <position position="163"/>
    </location>
    <ligand>
        <name>Zn(2+)</name>
        <dbReference type="ChEBI" id="CHEBI:29105"/>
        <label>2</label>
    </ligand>
</feature>
<feature type="binding site" evidence="2">
    <location>
        <position position="182"/>
    </location>
    <ligand>
        <name>Zn(2+)</name>
        <dbReference type="ChEBI" id="CHEBI:29105"/>
        <label>2</label>
    </ligand>
</feature>
<feature type="binding site" evidence="2">
    <location>
        <position position="185"/>
    </location>
    <ligand>
        <name>Zn(2+)</name>
        <dbReference type="ChEBI" id="CHEBI:29105"/>
        <label>2</label>
    </ligand>
</feature>
<feature type="binding site" evidence="2">
    <location>
        <position position="196"/>
    </location>
    <ligand>
        <name>Zn(2+)</name>
        <dbReference type="ChEBI" id="CHEBI:29105"/>
        <label>1</label>
    </ligand>
</feature>
<feature type="binding site" evidence="2">
    <location>
        <position position="199"/>
    </location>
    <ligand>
        <name>Zn(2+)</name>
        <dbReference type="ChEBI" id="CHEBI:29105"/>
        <label>1</label>
    </ligand>
</feature>